<dbReference type="EMBL" id="CP001098">
    <property type="protein sequence ID" value="ACL69942.1"/>
    <property type="molecule type" value="Genomic_DNA"/>
</dbReference>
<dbReference type="RefSeq" id="WP_012636127.1">
    <property type="nucleotide sequence ID" value="NC_011899.1"/>
</dbReference>
<dbReference type="SMR" id="B8CXC3"/>
<dbReference type="STRING" id="373903.Hore_11920"/>
<dbReference type="KEGG" id="hor:Hore_11920"/>
<dbReference type="eggNOG" id="COG1058">
    <property type="taxonomic scope" value="Bacteria"/>
</dbReference>
<dbReference type="eggNOG" id="COG1546">
    <property type="taxonomic scope" value="Bacteria"/>
</dbReference>
<dbReference type="HOGENOM" id="CLU_030805_9_3_9"/>
<dbReference type="OrthoDB" id="9801454at2"/>
<dbReference type="Proteomes" id="UP000000719">
    <property type="component" value="Chromosome"/>
</dbReference>
<dbReference type="CDD" id="cd00885">
    <property type="entry name" value="cinA"/>
    <property type="match status" value="1"/>
</dbReference>
<dbReference type="Gene3D" id="3.30.70.2860">
    <property type="match status" value="1"/>
</dbReference>
<dbReference type="Gene3D" id="3.90.950.20">
    <property type="entry name" value="CinA-like"/>
    <property type="match status" value="1"/>
</dbReference>
<dbReference type="Gene3D" id="3.40.980.10">
    <property type="entry name" value="MoaB/Mog-like domain"/>
    <property type="match status" value="1"/>
</dbReference>
<dbReference type="HAMAP" id="MF_00226_B">
    <property type="entry name" value="CinA_B"/>
    <property type="match status" value="1"/>
</dbReference>
<dbReference type="InterPro" id="IPR050101">
    <property type="entry name" value="CinA"/>
</dbReference>
<dbReference type="InterPro" id="IPR036653">
    <property type="entry name" value="CinA-like_C"/>
</dbReference>
<dbReference type="InterPro" id="IPR008136">
    <property type="entry name" value="CinA_C"/>
</dbReference>
<dbReference type="InterPro" id="IPR041424">
    <property type="entry name" value="CinA_KH"/>
</dbReference>
<dbReference type="InterPro" id="IPR008135">
    <property type="entry name" value="Competence-induced_CinA"/>
</dbReference>
<dbReference type="InterPro" id="IPR036425">
    <property type="entry name" value="MoaB/Mog-like_dom_sf"/>
</dbReference>
<dbReference type="InterPro" id="IPR001453">
    <property type="entry name" value="MoaB/Mog_dom"/>
</dbReference>
<dbReference type="NCBIfam" id="TIGR00200">
    <property type="entry name" value="cinA_nterm"/>
    <property type="match status" value="1"/>
</dbReference>
<dbReference type="NCBIfam" id="TIGR00177">
    <property type="entry name" value="molyb_syn"/>
    <property type="match status" value="1"/>
</dbReference>
<dbReference type="NCBIfam" id="TIGR00199">
    <property type="entry name" value="PncC_domain"/>
    <property type="match status" value="1"/>
</dbReference>
<dbReference type="NCBIfam" id="NF001813">
    <property type="entry name" value="PRK00549.1"/>
    <property type="match status" value="1"/>
</dbReference>
<dbReference type="PANTHER" id="PTHR13939">
    <property type="entry name" value="NICOTINAMIDE-NUCLEOTIDE AMIDOHYDROLASE PNCC"/>
    <property type="match status" value="1"/>
</dbReference>
<dbReference type="PANTHER" id="PTHR13939:SF0">
    <property type="entry name" value="NMN AMIDOHYDROLASE-LIKE PROTEIN YFAY"/>
    <property type="match status" value="1"/>
</dbReference>
<dbReference type="Pfam" id="PF02464">
    <property type="entry name" value="CinA"/>
    <property type="match status" value="1"/>
</dbReference>
<dbReference type="Pfam" id="PF18146">
    <property type="entry name" value="CinA_KH"/>
    <property type="match status" value="1"/>
</dbReference>
<dbReference type="Pfam" id="PF00994">
    <property type="entry name" value="MoCF_biosynth"/>
    <property type="match status" value="1"/>
</dbReference>
<dbReference type="PIRSF" id="PIRSF006728">
    <property type="entry name" value="CinA"/>
    <property type="match status" value="1"/>
</dbReference>
<dbReference type="SMART" id="SM00852">
    <property type="entry name" value="MoCF_biosynth"/>
    <property type="match status" value="1"/>
</dbReference>
<dbReference type="SUPFAM" id="SSF142433">
    <property type="entry name" value="CinA-like"/>
    <property type="match status" value="1"/>
</dbReference>
<dbReference type="SUPFAM" id="SSF53218">
    <property type="entry name" value="Molybdenum cofactor biosynthesis proteins"/>
    <property type="match status" value="1"/>
</dbReference>
<comment type="similarity">
    <text evidence="1">Belongs to the CinA family.</text>
</comment>
<organism>
    <name type="scientific">Halothermothrix orenii (strain H 168 / OCM 544 / DSM 9562)</name>
    <dbReference type="NCBI Taxonomy" id="373903"/>
    <lineage>
        <taxon>Bacteria</taxon>
        <taxon>Bacillati</taxon>
        <taxon>Bacillota</taxon>
        <taxon>Clostridia</taxon>
        <taxon>Halanaerobiales</taxon>
        <taxon>Halothermotrichaceae</taxon>
        <taxon>Halothermothrix</taxon>
    </lineage>
</organism>
<protein>
    <recommendedName>
        <fullName evidence="1">Putative competence-damage inducible protein</fullName>
    </recommendedName>
</protein>
<keyword id="KW-1185">Reference proteome</keyword>
<proteinExistence type="inferred from homology"/>
<accession>B8CXC3</accession>
<sequence length="413" mass="45154">MIAEIISIGTELLHGDIVDTNSAYLAEKLTGCGIDVHYISTVGDNKQRLYKTLQQAVERADLIITTGGLGPTMDDLTREAISEITTCPLVMRPDLVIDIEGYFNHKRTTMTPNNLKQSYLPEGAIPINNPVGTAPGILLEKDNYIIISLPGVPREMKIMFEESVLPYIKKKNNLMIISKELHFIGIGESTLETKLEDIMDSMNPSLALLAGDGEVKLKITGKGRTKKKIENKISEIVKTVRNRVGEYIYGEDETSLPDEIGKLLSKRGVTIALAESCTGGLIGARITDIPGSSAYFKGGVIAYSNEVKINHLGVNKNTINKEGAVSPETAAEMASGVRQRLEADIGLSVTGIAGPEGGTDEKPVGLVYVGLAGIDGEVKTYKLNFKGDRNKNRWLTTQSAFYYLYRYLKFSFK</sequence>
<feature type="chain" id="PRO_1000124985" description="Putative competence-damage inducible protein">
    <location>
        <begin position="1"/>
        <end position="413"/>
    </location>
</feature>
<evidence type="ECO:0000255" key="1">
    <source>
        <dbReference type="HAMAP-Rule" id="MF_00226"/>
    </source>
</evidence>
<reference key="1">
    <citation type="journal article" date="2009" name="PLoS ONE">
        <title>Genome analysis of the anaerobic thermohalophilic bacterium Halothermothrix orenii.</title>
        <authorList>
            <person name="Mavromatis K."/>
            <person name="Ivanova N."/>
            <person name="Anderson I."/>
            <person name="Lykidis A."/>
            <person name="Hooper S.D."/>
            <person name="Sun H."/>
            <person name="Kunin V."/>
            <person name="Lapidus A."/>
            <person name="Hugenholtz P."/>
            <person name="Patel B."/>
            <person name="Kyrpides N.C."/>
        </authorList>
    </citation>
    <scope>NUCLEOTIDE SEQUENCE [LARGE SCALE GENOMIC DNA]</scope>
    <source>
        <strain>H 168 / OCM 544 / DSM 9562</strain>
    </source>
</reference>
<gene>
    <name evidence="1" type="primary">cinA</name>
    <name type="ordered locus">Hore_11920</name>
</gene>
<name>CINA_HALOH</name>